<accession>P78710</accession>
<accession>Q7RVB7</accession>
<proteinExistence type="evidence at transcript level"/>
<keyword id="KW-0119">Carbohydrate metabolism</keyword>
<keyword id="KW-0961">Cell wall biogenesis/degradation</keyword>
<keyword id="KW-1015">Disulfide bond</keyword>
<keyword id="KW-0325">Glycoprotein</keyword>
<keyword id="KW-0456">Lyase</keyword>
<keyword id="KW-0624">Polysaccharide degradation</keyword>
<keyword id="KW-1185">Reference proteome</keyword>
<keyword id="KW-0964">Secreted</keyword>
<keyword id="KW-0732">Signal</keyword>
<gene>
    <name type="primary">asd-1</name>
    <name type="ORF">NCU05598</name>
</gene>
<name>ASD1_NEUCR</name>
<reference key="1">
    <citation type="journal article" date="1997" name="Genetics">
        <title>A putative rhamnogalacturonase required for sexual development of Neurospora crassa.</title>
        <authorList>
            <person name="Nelson M.A."/>
            <person name="Merino S.T."/>
            <person name="Metzenberg R.L."/>
        </authorList>
    </citation>
    <scope>NUCLEOTIDE SEQUENCE [GENOMIC DNA]</scope>
</reference>
<reference key="2">
    <citation type="journal article" date="2003" name="Nature">
        <title>The genome sequence of the filamentous fungus Neurospora crassa.</title>
        <authorList>
            <person name="Galagan J.E."/>
            <person name="Calvo S.E."/>
            <person name="Borkovich K.A."/>
            <person name="Selker E.U."/>
            <person name="Read N.D."/>
            <person name="Jaffe D.B."/>
            <person name="FitzHugh W."/>
            <person name="Ma L.-J."/>
            <person name="Smirnov S."/>
            <person name="Purcell S."/>
            <person name="Rehman B."/>
            <person name="Elkins T."/>
            <person name="Engels R."/>
            <person name="Wang S."/>
            <person name="Nielsen C.B."/>
            <person name="Butler J."/>
            <person name="Endrizzi M."/>
            <person name="Qui D."/>
            <person name="Ianakiev P."/>
            <person name="Bell-Pedersen D."/>
            <person name="Nelson M.A."/>
            <person name="Werner-Washburne M."/>
            <person name="Selitrennikoff C.P."/>
            <person name="Kinsey J.A."/>
            <person name="Braun E.L."/>
            <person name="Zelter A."/>
            <person name="Schulte U."/>
            <person name="Kothe G.O."/>
            <person name="Jedd G."/>
            <person name="Mewes H.-W."/>
            <person name="Staben C."/>
            <person name="Marcotte E."/>
            <person name="Greenberg D."/>
            <person name="Roy A."/>
            <person name="Foley K."/>
            <person name="Naylor J."/>
            <person name="Stange-Thomann N."/>
            <person name="Barrett R."/>
            <person name="Gnerre S."/>
            <person name="Kamal M."/>
            <person name="Kamvysselis M."/>
            <person name="Mauceli E.W."/>
            <person name="Bielke C."/>
            <person name="Rudd S."/>
            <person name="Frishman D."/>
            <person name="Krystofova S."/>
            <person name="Rasmussen C."/>
            <person name="Metzenberg R.L."/>
            <person name="Perkins D.D."/>
            <person name="Kroken S."/>
            <person name="Cogoni C."/>
            <person name="Macino G."/>
            <person name="Catcheside D.E.A."/>
            <person name="Li W."/>
            <person name="Pratt R.J."/>
            <person name="Osmani S.A."/>
            <person name="DeSouza C.P.C."/>
            <person name="Glass N.L."/>
            <person name="Orbach M.J."/>
            <person name="Berglund J.A."/>
            <person name="Voelker R."/>
            <person name="Yarden O."/>
            <person name="Plamann M."/>
            <person name="Seiler S."/>
            <person name="Dunlap J.C."/>
            <person name="Radford A."/>
            <person name="Aramayo R."/>
            <person name="Natvig D.O."/>
            <person name="Alex L.A."/>
            <person name="Mannhaupt G."/>
            <person name="Ebbole D.J."/>
            <person name="Freitag M."/>
            <person name="Paulsen I."/>
            <person name="Sachs M.S."/>
            <person name="Lander E.S."/>
            <person name="Nusbaum C."/>
            <person name="Birren B.W."/>
        </authorList>
    </citation>
    <scope>NUCLEOTIDE SEQUENCE [LARGE SCALE GENOMIC DNA]</scope>
    <source>
        <strain>ATCC 24698 / 74-OR23-1A / CBS 708.71 / DSM 1257 / FGSC 987</strain>
    </source>
</reference>
<comment type="function">
    <text>Could be a pectinolytic enzyme that hydrolyzes the alpha-L-rhamnopyranosyl-(1,4)-alpha-D-galacturonopyranosyl glycosidic linkage by beta-elimination, thereby generating oligosaccharides terminating at the non-reducing end with a hex-4-enopyranosyluronic acid residue.</text>
</comment>
<comment type="catalytic activity">
    <reaction>
        <text>Endotype eliminative cleavage of L-alpha-rhamnopyranosyl-(1-&gt;4)-alpha-D-galactopyranosyluronic acid bonds of rhamnogalacturonan I domains in ramified hairy regions of pectin leaving L-rhamnopyranose at the reducing end and 4-deoxy-4,5-unsaturated D-galactopyranosyluronic acid at the non-reducing end.</text>
        <dbReference type="EC" id="4.2.2.23"/>
    </reaction>
</comment>
<comment type="subcellular location">
    <subcellularLocation>
        <location evidence="1">Secreted</location>
    </subcellularLocation>
</comment>
<comment type="developmental stage">
    <text>Expressed preferentially during the sexual cycle and essential for normal sexual development.</text>
</comment>
<comment type="similarity">
    <text evidence="3">Belongs to the polysaccharide lyase 4 family.</text>
</comment>
<feature type="signal peptide" evidence="2">
    <location>
        <begin position="1"/>
        <end position="23"/>
    </location>
</feature>
<feature type="chain" id="PRO_0000024913" description="Putative rhamnogalacturonase">
    <location>
        <begin position="24"/>
        <end position="540"/>
    </location>
</feature>
<feature type="glycosylation site" description="N-linked (GlcNAc...) asparagine" evidence="2">
    <location>
        <position position="89"/>
    </location>
</feature>
<feature type="glycosylation site" description="N-linked (GlcNAc...) asparagine" evidence="2">
    <location>
        <position position="368"/>
    </location>
</feature>
<feature type="disulfide bond" evidence="1">
    <location>
        <begin position="53"/>
        <end position="100"/>
    </location>
</feature>
<feature type="disulfide bond" evidence="1">
    <location>
        <begin position="192"/>
        <end position="203"/>
    </location>
</feature>
<organism>
    <name type="scientific">Neurospora crassa (strain ATCC 24698 / 74-OR23-1A / CBS 708.71 / DSM 1257 / FGSC 987)</name>
    <dbReference type="NCBI Taxonomy" id="367110"/>
    <lineage>
        <taxon>Eukaryota</taxon>
        <taxon>Fungi</taxon>
        <taxon>Dikarya</taxon>
        <taxon>Ascomycota</taxon>
        <taxon>Pezizomycotina</taxon>
        <taxon>Sordariomycetes</taxon>
        <taxon>Sordariomycetidae</taxon>
        <taxon>Sordariales</taxon>
        <taxon>Sordariaceae</taxon>
        <taxon>Neurospora</taxon>
    </lineage>
</organism>
<evidence type="ECO:0000250" key="1"/>
<evidence type="ECO:0000255" key="2"/>
<evidence type="ECO:0000305" key="3"/>
<protein>
    <recommendedName>
        <fullName>Putative rhamnogalacturonase</fullName>
        <ecNumber>4.2.2.23</ecNumber>
    </recommendedName>
    <alternativeName>
        <fullName>Ascus development protein 1</fullName>
        <shortName>Asd-I</shortName>
    </alternativeName>
    <alternativeName>
        <fullName>Rhamnogalacturonan lyase</fullName>
        <shortName>RGase</shortName>
    </alternativeName>
</protein>
<dbReference type="EC" id="4.2.2.23"/>
<dbReference type="EMBL" id="U70861">
    <property type="protein sequence ID" value="AAB39649.1"/>
    <property type="molecule type" value="Genomic_DNA"/>
</dbReference>
<dbReference type="EMBL" id="CM002241">
    <property type="protein sequence ID" value="EAA31324.3"/>
    <property type="molecule type" value="Genomic_DNA"/>
</dbReference>
<dbReference type="RefSeq" id="XP_960560.3">
    <property type="nucleotide sequence ID" value="XM_955467.3"/>
</dbReference>
<dbReference type="SMR" id="P78710"/>
<dbReference type="STRING" id="367110.P78710"/>
<dbReference type="CAZy" id="PL4">
    <property type="family name" value="Polysaccharide Lyase Family 4"/>
</dbReference>
<dbReference type="GlyCosmos" id="P78710">
    <property type="glycosylation" value="2 sites, No reported glycans"/>
</dbReference>
<dbReference type="PaxDb" id="5141-EFNCRP00000005597"/>
<dbReference type="EnsemblFungi" id="EAA31324">
    <property type="protein sequence ID" value="EAA31324"/>
    <property type="gene ID" value="NCU05598"/>
</dbReference>
<dbReference type="GeneID" id="3876675"/>
<dbReference type="KEGG" id="ncr:NCU05598"/>
<dbReference type="VEuPathDB" id="FungiDB:NCU05598"/>
<dbReference type="HOGENOM" id="CLU_037882_1_1_1"/>
<dbReference type="InParanoid" id="P78710"/>
<dbReference type="OrthoDB" id="114708at2759"/>
<dbReference type="Proteomes" id="UP000001805">
    <property type="component" value="Chromosome 5, Linkage Group VI"/>
</dbReference>
<dbReference type="GO" id="GO:0005576">
    <property type="term" value="C:extracellular region"/>
    <property type="evidence" value="ECO:0007669"/>
    <property type="project" value="UniProtKB-SubCell"/>
</dbReference>
<dbReference type="GO" id="GO:0030246">
    <property type="term" value="F:carbohydrate binding"/>
    <property type="evidence" value="ECO:0007669"/>
    <property type="project" value="InterPro"/>
</dbReference>
<dbReference type="GO" id="GO:0016837">
    <property type="term" value="F:carbon-oxygen lyase activity, acting on polysaccharides"/>
    <property type="evidence" value="ECO:0000318"/>
    <property type="project" value="GO_Central"/>
</dbReference>
<dbReference type="GO" id="GO:0102210">
    <property type="term" value="F:rhamnogalacturonan endolyase activity"/>
    <property type="evidence" value="ECO:0007669"/>
    <property type="project" value="UniProtKB-EC"/>
</dbReference>
<dbReference type="GO" id="GO:0071555">
    <property type="term" value="P:cell wall organization"/>
    <property type="evidence" value="ECO:0007669"/>
    <property type="project" value="UniProtKB-KW"/>
</dbReference>
<dbReference type="GO" id="GO:0045490">
    <property type="term" value="P:pectin catabolic process"/>
    <property type="evidence" value="ECO:0000318"/>
    <property type="project" value="GO_Central"/>
</dbReference>
<dbReference type="CDD" id="cd10317">
    <property type="entry name" value="RGL4_C"/>
    <property type="match status" value="1"/>
</dbReference>
<dbReference type="CDD" id="cd10316">
    <property type="entry name" value="RGL4_M"/>
    <property type="match status" value="1"/>
</dbReference>
<dbReference type="CDD" id="cd10320">
    <property type="entry name" value="RGL4_N"/>
    <property type="match status" value="1"/>
</dbReference>
<dbReference type="FunFam" id="2.60.120.260:FF:000102">
    <property type="entry name" value="Rhamnogalacturonate lyase A"/>
    <property type="match status" value="1"/>
</dbReference>
<dbReference type="FunFam" id="2.60.40.1120:FF:000017">
    <property type="entry name" value="Rhamnogalacturonate lyase A"/>
    <property type="match status" value="1"/>
</dbReference>
<dbReference type="FunFam" id="2.70.98.10:FF:000020">
    <property type="entry name" value="Rhamnogalacturonate lyase A"/>
    <property type="match status" value="1"/>
</dbReference>
<dbReference type="Gene3D" id="2.70.98.10">
    <property type="match status" value="1"/>
</dbReference>
<dbReference type="Gene3D" id="2.60.40.1120">
    <property type="entry name" value="Carboxypeptidase-like, regulatory domain"/>
    <property type="match status" value="1"/>
</dbReference>
<dbReference type="Gene3D" id="2.60.120.260">
    <property type="entry name" value="Galactose-binding domain-like"/>
    <property type="match status" value="1"/>
</dbReference>
<dbReference type="InterPro" id="IPR013784">
    <property type="entry name" value="Carb-bd-like_fold"/>
</dbReference>
<dbReference type="InterPro" id="IPR011013">
    <property type="entry name" value="Gal_mutarotase_sf_dom"/>
</dbReference>
<dbReference type="InterPro" id="IPR008979">
    <property type="entry name" value="Galactose-bd-like_sf"/>
</dbReference>
<dbReference type="InterPro" id="IPR014718">
    <property type="entry name" value="GH-type_carb-bd"/>
</dbReference>
<dbReference type="InterPro" id="IPR029413">
    <property type="entry name" value="RG-lyase_II"/>
</dbReference>
<dbReference type="InterPro" id="IPR029411">
    <property type="entry name" value="RG-lyase_III"/>
</dbReference>
<dbReference type="InterPro" id="IPR016590">
    <property type="entry name" value="Rhamnogalacturonase_B"/>
</dbReference>
<dbReference type="InterPro" id="IPR015364">
    <property type="entry name" value="RhgB_N"/>
</dbReference>
<dbReference type="PANTHER" id="PTHR36574">
    <property type="entry name" value="RHAMNOGALACTURONATE LYASE-RELATED"/>
    <property type="match status" value="1"/>
</dbReference>
<dbReference type="PANTHER" id="PTHR36574:SF1">
    <property type="entry name" value="RHAMNOGALACTURONATE LYASE-RELATED"/>
    <property type="match status" value="1"/>
</dbReference>
<dbReference type="Pfam" id="PF14683">
    <property type="entry name" value="CBM-like"/>
    <property type="match status" value="1"/>
</dbReference>
<dbReference type="Pfam" id="PF14686">
    <property type="entry name" value="fn3_3"/>
    <property type="match status" value="1"/>
</dbReference>
<dbReference type="Pfam" id="PF09284">
    <property type="entry name" value="RhgB_N"/>
    <property type="match status" value="1"/>
</dbReference>
<dbReference type="PIRSF" id="PIRSF011794">
    <property type="entry name" value="Rhamnogalacturonase_B"/>
    <property type="match status" value="1"/>
</dbReference>
<dbReference type="SUPFAM" id="SSF74650">
    <property type="entry name" value="Galactose mutarotase-like"/>
    <property type="match status" value="1"/>
</dbReference>
<dbReference type="SUPFAM" id="SSF49785">
    <property type="entry name" value="Galactose-binding domain-like"/>
    <property type="match status" value="1"/>
</dbReference>
<dbReference type="SUPFAM" id="SSF49452">
    <property type="entry name" value="Starch-binding domain-like"/>
    <property type="match status" value="1"/>
</dbReference>
<sequence>MGFLTLFHMAFLAVSLFVSGALAAFGYTTSGNNFVIDAGSANPLIFSVSKSSCDINSIRYRGTELQYSKQGSHIGSGLGKATVSVSQINGSKSKFIKVTCVTSTLTQYMIVKEADSTIYMATYITAEPAIGELRFIARLLSDKLPYEYPYGEVSTTKGSSSTVEGSDVFVVNGQTRSKFYSSTRFIDEDSHCVYGGSDLTHVCIITPQQESSSGGPFFRDIDSNNAGESTNLYNYMNSGHVQTEDRRMGLHGPYLMTFSRSGIPKLKTVDISWFGELGVTGYVPDSQRGTVIGRATGIPSGFEGVVHWYNAAAQYWVRTAPNGDFTSPKMKPGTYTMVLYQTEFKVATSTVTVSAGKTTTASIASTFNTSHTTLFKIGEYDGQPTGFRNADKFLRMHPSDSRMSSWGPLTYTVGSSSLNDFPMAVFKSVNNPVTIKFNLGSAPSQATTLRIATTLSFAGARPQVVVNGWSAPAPAAPAKIDSRGVTRGAYRGYGEVYDVAVPAGKLISGTNTITISALSGSSGATFLSPNFIFDAVELFY</sequence>